<sequence>MSRIPLGKVLLRNVIRHTDAHNKIQEESDMWKIRELEKQMEDAYRGTKRKMLPSSSSRMRSDGFDEESQRYYWRPKNEISGTLEDDFLKAKSWNKKFYDYEANMPDRWGHSGYKELYPEEFETDSDQQDITNGKKTSPQVKSSTHESRKHKKSKKSHKKKQKKRSHKKQKKSKKEATDITADSSSEFSEETGASGTRKGKQPHKRKKKSRKKSLKKPALFLEAESNTSHSDDSASSSSEESEERDTKKTKRKKREKKAHTSVANNEIQERTNKRTNWKVATDERSAESSEDD</sequence>
<feature type="chain" id="PRO_0000274244" description="Uncharacterized protein NKAPD1">
    <location>
        <begin position="1"/>
        <end position="292"/>
    </location>
</feature>
<feature type="region of interest" description="Disordered" evidence="1">
    <location>
        <begin position="47"/>
        <end position="67"/>
    </location>
</feature>
<feature type="region of interest" description="Disordered" evidence="1">
    <location>
        <begin position="122"/>
        <end position="292"/>
    </location>
</feature>
<feature type="compositionally biased region" description="Polar residues" evidence="1">
    <location>
        <begin position="128"/>
        <end position="140"/>
    </location>
</feature>
<feature type="compositionally biased region" description="Basic residues" evidence="1">
    <location>
        <begin position="147"/>
        <end position="173"/>
    </location>
</feature>
<feature type="compositionally biased region" description="Polar residues" evidence="1">
    <location>
        <begin position="180"/>
        <end position="194"/>
    </location>
</feature>
<feature type="compositionally biased region" description="Basic residues" evidence="1">
    <location>
        <begin position="197"/>
        <end position="215"/>
    </location>
</feature>
<feature type="compositionally biased region" description="Basic residues" evidence="1">
    <location>
        <begin position="247"/>
        <end position="259"/>
    </location>
</feature>
<feature type="compositionally biased region" description="Basic and acidic residues" evidence="1">
    <location>
        <begin position="280"/>
        <end position="292"/>
    </location>
</feature>
<feature type="cross-link" description="Glycyl lysine isopeptide (Lys-Gly) (interchain with G-Cter in SUMO2)" evidence="7">
    <location>
        <position position="8"/>
    </location>
</feature>
<feature type="cross-link" description="Glycyl lysine isopeptide (Lys-Gly) (interchain with G-Cter in SUMO2)" evidence="7">
    <location>
        <position position="76"/>
    </location>
</feature>
<feature type="splice variant" id="VSP_022685" description="In isoform 3." evidence="3">
    <location>
        <begin position="1"/>
        <end position="29"/>
    </location>
</feature>
<feature type="splice variant" id="VSP_022686" description="In isoform 2 and isoform 3." evidence="2 3">
    <original>D</original>
    <variation>DS</variation>
    <location>
        <position position="124"/>
    </location>
</feature>
<feature type="sequence conflict" description="In Ref. 3; AAH48133." evidence="4" ref="3">
    <original>K</original>
    <variation>E</variation>
    <location>
        <position position="32"/>
    </location>
</feature>
<feature type="sequence conflict" description="In Ref. 2; CAD98020." evidence="4" ref="2">
    <original>K</original>
    <variation>R</variation>
    <location>
        <position position="96"/>
    </location>
</feature>
<feature type="sequence conflict" description="In Ref. 1; BAC86137." evidence="4" ref="1">
    <original>D</original>
    <variation>N</variation>
    <location>
        <position position="124"/>
    </location>
</feature>
<feature type="modified residue" description="Phosphothreonine" evidence="6">
    <location sequence="Q6ZUT1-2">
        <position position="123"/>
    </location>
</feature>
<feature type="modified residue" description="Phosphoserine" evidence="6">
    <location sequence="Q6ZUT1-2">
        <position position="125"/>
    </location>
</feature>
<feature type="modified residue" description="Phosphoserine" evidence="6">
    <location sequence="Q6ZUT1-2">
        <position position="126"/>
    </location>
</feature>
<feature type="modified residue" description="Phosphothreonine" evidence="6">
    <location sequence="Q6ZUT1-3">
        <position position="94"/>
    </location>
</feature>
<feature type="modified residue" description="Phosphoserine" evidence="6">
    <location sequence="Q6ZUT1-3">
        <position position="96"/>
    </location>
</feature>
<feature type="modified residue" description="Phosphoserine" evidence="6">
    <location sequence="Q6ZUT1-3">
        <position position="97"/>
    </location>
</feature>
<comment type="interaction">
    <interactant intactId="EBI-3920396">
        <id>Q6ZUT1</id>
    </interactant>
    <interactant intactId="EBI-351710">
        <id>P12814</id>
        <label>ACTN1</label>
    </interactant>
    <organismsDiffer>false</organismsDiffer>
    <experiments>3</experiments>
</comment>
<comment type="interaction">
    <interactant intactId="EBI-3920396">
        <id>Q6ZUT1</id>
    </interactant>
    <interactant intactId="EBI-77797">
        <id>P35609</id>
        <label>ACTN2</label>
    </interactant>
    <organismsDiffer>false</organismsDiffer>
    <experiments>3</experiments>
</comment>
<comment type="interaction">
    <interactant intactId="EBI-3920396">
        <id>Q6ZUT1</id>
    </interactant>
    <interactant intactId="EBI-2880652">
        <id>Q08043</id>
        <label>ACTN3</label>
    </interactant>
    <organismsDiffer>false</organismsDiffer>
    <experiments>3</experiments>
</comment>
<comment type="interaction">
    <interactant intactId="EBI-3920396">
        <id>Q6ZUT1</id>
    </interactant>
    <interactant intactId="EBI-2803601">
        <id>Q9NRZ7</id>
        <label>AGPAT3</label>
    </interactant>
    <organismsDiffer>false</organismsDiffer>
    <experiments>3</experiments>
</comment>
<comment type="interaction">
    <interactant intactId="EBI-3920396">
        <id>Q6ZUT1</id>
    </interactant>
    <interactant intactId="EBI-541426">
        <id>Q9BXS5</id>
        <label>AP1M1</label>
    </interactant>
    <organismsDiffer>false</organismsDiffer>
    <experiments>3</experiments>
</comment>
<comment type="interaction">
    <interactant intactId="EBI-3920396">
        <id>Q6ZUT1</id>
    </interactant>
    <interactant intactId="EBI-297683">
        <id>Q96CW1</id>
        <label>AP2M1</label>
    </interactant>
    <organismsDiffer>false</organismsDiffer>
    <experiments>3</experiments>
</comment>
<comment type="interaction">
    <interactant intactId="EBI-3920396">
        <id>Q6ZUT1</id>
    </interactant>
    <interactant intactId="EBI-12248874">
        <id>A0A0C4DG62</id>
        <label>ARL6IP4</label>
    </interactant>
    <organismsDiffer>false</organismsDiffer>
    <experiments>3</experiments>
</comment>
<comment type="interaction">
    <interactant intactId="EBI-3920396">
        <id>Q6ZUT1</id>
    </interactant>
    <interactant intactId="EBI-10181188">
        <id>Q8N7W2-2</id>
        <label>BEND7</label>
    </interactant>
    <organismsDiffer>false</organismsDiffer>
    <experiments>6</experiments>
</comment>
<comment type="interaction">
    <interactant intactId="EBI-3920396">
        <id>Q6ZUT1</id>
    </interactant>
    <interactant intactId="EBI-711501">
        <id>Q9BWC9</id>
        <label>CCDC106</label>
    </interactant>
    <organismsDiffer>false</organismsDiffer>
    <experiments>5</experiments>
</comment>
<comment type="interaction">
    <interactant intactId="EBI-3920396">
        <id>Q6ZUT1</id>
    </interactant>
    <interactant intactId="EBI-2836773">
        <id>Q9UK58</id>
        <label>CCNL1</label>
    </interactant>
    <organismsDiffer>false</organismsDiffer>
    <experiments>6</experiments>
</comment>
<comment type="interaction">
    <interactant intactId="EBI-3920396">
        <id>Q6ZUT1</id>
    </interactant>
    <interactant intactId="EBI-979174">
        <id>Q53HL2</id>
        <label>CDCA8</label>
    </interactant>
    <organismsDiffer>false</organismsDiffer>
    <experiments>3</experiments>
</comment>
<comment type="interaction">
    <interactant intactId="EBI-3920396">
        <id>Q6ZUT1</id>
    </interactant>
    <interactant intactId="EBI-739624">
        <id>Q8NHQ1</id>
        <label>CEP70</label>
    </interactant>
    <organismsDiffer>false</organismsDiffer>
    <experiments>6</experiments>
</comment>
<comment type="interaction">
    <interactant intactId="EBI-3920396">
        <id>Q6ZUT1</id>
    </interactant>
    <interactant intactId="EBI-945751">
        <id>P38432</id>
        <label>COIL</label>
    </interactant>
    <organismsDiffer>false</organismsDiffer>
    <experiments>3</experiments>
</comment>
<comment type="interaction">
    <interactant intactId="EBI-3920396">
        <id>Q6ZUT1</id>
    </interactant>
    <interactant intactId="EBI-12051833">
        <id>Q5HYN5</id>
        <label>CT45A1</label>
    </interactant>
    <organismsDiffer>false</organismsDiffer>
    <experiments>3</experiments>
</comment>
<comment type="interaction">
    <interactant intactId="EBI-3920396">
        <id>Q6ZUT1</id>
    </interactant>
    <interactant intactId="EBI-741705">
        <id>Q8IYF1</id>
        <label>ELOA2</label>
    </interactant>
    <organismsDiffer>false</organismsDiffer>
    <experiments>3</experiments>
</comment>
<comment type="interaction">
    <interactant intactId="EBI-3920396">
        <id>Q6ZUT1</id>
    </interactant>
    <interactant intactId="EBI-371876">
        <id>Q9NQT4</id>
        <label>EXOSC5</label>
    </interactant>
    <organismsDiffer>false</organismsDiffer>
    <experiments>3</experiments>
</comment>
<comment type="interaction">
    <interactant intactId="EBI-3920396">
        <id>Q6ZUT1</id>
    </interactant>
    <interactant intactId="EBI-10268158">
        <id>Q8N9E0</id>
        <label>FAM133A</label>
    </interactant>
    <organismsDiffer>false</organismsDiffer>
    <experiments>3</experiments>
</comment>
<comment type="interaction">
    <interactant intactId="EBI-3920396">
        <id>Q6ZUT1</id>
    </interactant>
    <interactant intactId="EBI-13213391">
        <id>Q96NE9-2</id>
        <label>FRMD6</label>
    </interactant>
    <organismsDiffer>false</organismsDiffer>
    <experiments>3</experiments>
</comment>
<comment type="interaction">
    <interactant intactId="EBI-3920396">
        <id>Q6ZUT1</id>
    </interactant>
    <interactant intactId="EBI-1052570">
        <id>O95995</id>
        <label>GAS8</label>
    </interactant>
    <organismsDiffer>false</organismsDiffer>
    <experiments>3</experiments>
</comment>
<comment type="interaction">
    <interactant intactId="EBI-3920396">
        <id>Q6ZUT1</id>
    </interactant>
    <interactant intactId="EBI-12142839">
        <id>U3KQK0</id>
        <label>H2BC15</label>
    </interactant>
    <organismsDiffer>false</organismsDiffer>
    <experiments>3</experiments>
</comment>
<comment type="interaction">
    <interactant intactId="EBI-3920396">
        <id>Q6ZUT1</id>
    </interactant>
    <interactant intactId="EBI-7261162">
        <id>Q9UGU5</id>
        <label>HMGXB4</label>
    </interactant>
    <organismsDiffer>false</organismsDiffer>
    <experiments>3</experiments>
</comment>
<comment type="interaction">
    <interactant intactId="EBI-3920396">
        <id>Q6ZUT1</id>
    </interactant>
    <interactant intactId="EBI-2805442">
        <id>Q9NPI7</id>
        <label>KRCC1</label>
    </interactant>
    <organismsDiffer>false</organismsDiffer>
    <experiments>3</experiments>
</comment>
<comment type="interaction">
    <interactant intactId="EBI-3920396">
        <id>Q6ZUT1</id>
    </interactant>
    <interactant intactId="EBI-2868511">
        <id>O75367</id>
        <label>MACROH2A1</label>
    </interactant>
    <organismsDiffer>false</organismsDiffer>
    <experiments>3</experiments>
</comment>
<comment type="interaction">
    <interactant intactId="EBI-3920396">
        <id>Q6ZUT1</id>
    </interactant>
    <interactant intactId="EBI-348259">
        <id>Q96EZ8</id>
        <label>MCRS1</label>
    </interactant>
    <organismsDiffer>false</organismsDiffer>
    <experiments>6</experiments>
</comment>
<comment type="interaction">
    <interactant intactId="EBI-3920396">
        <id>Q6ZUT1</id>
    </interactant>
    <interactant intactId="EBI-742459">
        <id>Q9BU76</id>
        <label>MMTAG2</label>
    </interactant>
    <organismsDiffer>false</organismsDiffer>
    <experiments>3</experiments>
</comment>
<comment type="interaction">
    <interactant intactId="EBI-3920396">
        <id>Q6ZUT1</id>
    </interactant>
    <interactant intactId="EBI-7950783">
        <id>Q96JP2</id>
        <label>MYO15B</label>
    </interactant>
    <organismsDiffer>false</organismsDiffer>
    <experiments>3</experiments>
</comment>
<comment type="interaction">
    <interactant intactId="EBI-3920396">
        <id>Q6ZUT1</id>
    </interactant>
    <interactant intactId="EBI-3920396">
        <id>Q6ZUT1</id>
        <label>NKAPD1</label>
    </interactant>
    <organismsDiffer>false</organismsDiffer>
    <experiments>3</experiments>
</comment>
<comment type="interaction">
    <interactant intactId="EBI-3920396">
        <id>Q6ZUT1</id>
    </interactant>
    <interactant intactId="EBI-11423380">
        <id>Q5M9Q1</id>
        <label>NKAPL</label>
    </interactant>
    <organismsDiffer>false</organismsDiffer>
    <experiments>3</experiments>
</comment>
<comment type="interaction">
    <interactant intactId="EBI-3920396">
        <id>Q6ZUT1</id>
    </interactant>
    <interactant intactId="EBI-398874">
        <id>Q9UBU9</id>
        <label>NXF1</label>
    </interactant>
    <organismsDiffer>false</organismsDiffer>
    <experiments>3</experiments>
</comment>
<comment type="interaction">
    <interactant intactId="EBI-3920396">
        <id>Q6ZUT1</id>
    </interactant>
    <interactant intactId="EBI-744322">
        <id>O43395</id>
        <label>PRPF3</label>
    </interactant>
    <organismsDiffer>false</organismsDiffer>
    <experiments>3</experiments>
</comment>
<comment type="interaction">
    <interactant intactId="EBI-3920396">
        <id>Q6ZUT1</id>
    </interactant>
    <interactant intactId="EBI-5280197">
        <id>O75400-2</id>
        <label>PRPF40A</label>
    </interactant>
    <organismsDiffer>false</organismsDiffer>
    <experiments>3</experiments>
</comment>
<comment type="interaction">
    <interactant intactId="EBI-3920396">
        <id>Q6ZUT1</id>
    </interactant>
    <interactant intactId="EBI-395290">
        <id>Q14498</id>
        <label>RBM39</label>
    </interactant>
    <organismsDiffer>false</organismsDiffer>
    <experiments>6</experiments>
</comment>
<comment type="interaction">
    <interactant intactId="EBI-3920396">
        <id>Q6ZUT1</id>
    </interactant>
    <interactant intactId="EBI-12002474">
        <id>Q2KHN1</id>
        <label>RNF151</label>
    </interactant>
    <organismsDiffer>false</organismsDiffer>
    <experiments>6</experiments>
</comment>
<comment type="interaction">
    <interactant intactId="EBI-3920396">
        <id>Q6ZUT1</id>
    </interactant>
    <interactant intactId="EBI-395959">
        <id>Q15287</id>
        <label>RNPS1</label>
    </interactant>
    <organismsDiffer>false</organismsDiffer>
    <experiments>5</experiments>
</comment>
<comment type="interaction">
    <interactant intactId="EBI-3920396">
        <id>Q6ZUT1</id>
    </interactant>
    <interactant intactId="EBI-630339">
        <id>Q8TA86</id>
        <label>RP9</label>
    </interactant>
    <organismsDiffer>false</organismsDiffer>
    <experiments>3</experiments>
</comment>
<comment type="interaction">
    <interactant intactId="EBI-3920396">
        <id>Q6ZUT1</id>
    </interactant>
    <interactant intactId="EBI-353054">
        <id>P62851</id>
        <label>RPS25</label>
    </interactant>
    <organismsDiffer>false</organismsDiffer>
    <experiments>3</experiments>
</comment>
<comment type="interaction">
    <interactant intactId="EBI-3920396">
        <id>Q6ZUT1</id>
    </interactant>
    <interactant intactId="EBI-727004">
        <id>O00560</id>
        <label>SDCBP</label>
    </interactant>
    <organismsDiffer>false</organismsDiffer>
    <experiments>8</experiments>
</comment>
<comment type="interaction">
    <interactant intactId="EBI-3920396">
        <id>Q6ZUT1</id>
    </interactant>
    <interactant intactId="EBI-742426">
        <id>Q9H190</id>
        <label>SDCBP2</label>
    </interactant>
    <organismsDiffer>false</organismsDiffer>
    <experiments>6</experiments>
</comment>
<comment type="interaction">
    <interactant intactId="EBI-3920396">
        <id>Q6ZUT1</id>
    </interactant>
    <interactant intactId="EBI-9675976">
        <id>Q9BV90</id>
        <label>SNRNP25</label>
    </interactant>
    <organismsDiffer>false</organismsDiffer>
    <experiments>3</experiments>
</comment>
<comment type="interaction">
    <interactant intactId="EBI-3920396">
        <id>Q6ZUT1</id>
    </interactant>
    <interactant intactId="EBI-10268630">
        <id>Q8N9Q2</id>
        <label>SREK1IP1</label>
    </interactant>
    <organismsDiffer>false</organismsDiffer>
    <experiments>6</experiments>
</comment>
<comment type="interaction">
    <interactant intactId="EBI-3920396">
        <id>Q6ZUT1</id>
    </interactant>
    <interactant intactId="EBI-745680">
        <id>Q96MF2</id>
        <label>STAC3</label>
    </interactant>
    <organismsDiffer>false</organismsDiffer>
    <experiments>6</experiments>
</comment>
<comment type="interaction">
    <interactant intactId="EBI-3920396">
        <id>Q6ZUT1</id>
    </interactant>
    <interactant intactId="EBI-2510647">
        <id>Q15573</id>
        <label>TAF1A</label>
    </interactant>
    <organismsDiffer>false</organismsDiffer>
    <experiments>3</experiments>
</comment>
<comment type="interaction">
    <interactant intactId="EBI-3920396">
        <id>Q6ZUT1</id>
    </interactant>
    <interactant intactId="EBI-741515">
        <id>Q9NVV9</id>
        <label>THAP1</label>
    </interactant>
    <organismsDiffer>false</organismsDiffer>
    <experiments>6</experiments>
</comment>
<comment type="interaction">
    <interactant intactId="EBI-3920396">
        <id>Q6ZUT1</id>
    </interactant>
    <interactant intactId="EBI-359793">
        <id>P40222</id>
        <label>TXLNA</label>
    </interactant>
    <organismsDiffer>false</organismsDiffer>
    <experiments>3</experiments>
</comment>
<comment type="interaction">
    <interactant intactId="EBI-3920396">
        <id>Q6ZUT1</id>
    </interactant>
    <interactant intactId="EBI-11097439">
        <id>P26368-2</id>
        <label>U2AF2</label>
    </interactant>
    <organismsDiffer>false</organismsDiffer>
    <experiments>3</experiments>
</comment>
<comment type="interaction">
    <interactant intactId="EBI-3920396">
        <id>Q6ZUT1</id>
    </interactant>
    <interactant intactId="EBI-1210473">
        <id>Q96PQ6</id>
        <label>ZNF317</label>
    </interactant>
    <organismsDiffer>false</organismsDiffer>
    <experiments>7</experiments>
</comment>
<comment type="interaction">
    <interactant intactId="EBI-3920396">
        <id>Q6ZUT1</id>
    </interactant>
    <interactant intactId="EBI-12700258">
        <id>P51814-6</id>
        <label>ZNF41</label>
    </interactant>
    <organismsDiffer>false</organismsDiffer>
    <experiments>3</experiments>
</comment>
<comment type="interaction">
    <interactant intactId="EBI-10180231">
        <id>Q6ZUT1-2</id>
    </interactant>
    <interactant intactId="EBI-10181188">
        <id>Q8N7W2-2</id>
        <label>BEND7</label>
    </interactant>
    <organismsDiffer>false</organismsDiffer>
    <experiments>3</experiments>
</comment>
<comment type="interaction">
    <interactant intactId="EBI-10180231">
        <id>Q6ZUT1-2</id>
    </interactant>
    <interactant intactId="EBI-739624">
        <id>Q8NHQ1</id>
        <label>CEP70</label>
    </interactant>
    <organismsDiffer>false</organismsDiffer>
    <experiments>3</experiments>
</comment>
<comment type="interaction">
    <interactant intactId="EBI-10180231">
        <id>Q6ZUT1-2</id>
    </interactant>
    <interactant intactId="EBI-395290">
        <id>Q14498</id>
        <label>RBM39</label>
    </interactant>
    <organismsDiffer>false</organismsDiffer>
    <experiments>3</experiments>
</comment>
<comment type="interaction">
    <interactant intactId="EBI-10180231">
        <id>Q6ZUT1-2</id>
    </interactant>
    <interactant intactId="EBI-727004">
        <id>O00560</id>
        <label>SDCBP</label>
    </interactant>
    <organismsDiffer>false</organismsDiffer>
    <experiments>3</experiments>
</comment>
<comment type="interaction">
    <interactant intactId="EBI-10180231">
        <id>Q6ZUT1-2</id>
    </interactant>
    <interactant intactId="EBI-742426">
        <id>Q9H190</id>
        <label>SDCBP2</label>
    </interactant>
    <organismsDiffer>false</organismsDiffer>
    <experiments>3</experiments>
</comment>
<comment type="interaction">
    <interactant intactId="EBI-10180231">
        <id>Q6ZUT1-2</id>
    </interactant>
    <interactant intactId="EBI-745680">
        <id>Q96MF2</id>
        <label>STAC3</label>
    </interactant>
    <organismsDiffer>false</organismsDiffer>
    <experiments>3</experiments>
</comment>
<comment type="interaction">
    <interactant intactId="EBI-10180231">
        <id>Q6ZUT1-2</id>
    </interactant>
    <interactant intactId="EBI-2510647">
        <id>Q15573</id>
        <label>TAF1A</label>
    </interactant>
    <organismsDiffer>false</organismsDiffer>
    <experiments>3</experiments>
</comment>
<comment type="interaction">
    <interactant intactId="EBI-10180231">
        <id>Q6ZUT1-2</id>
    </interactant>
    <interactant intactId="EBI-741515">
        <id>Q9NVV9</id>
        <label>THAP1</label>
    </interactant>
    <organismsDiffer>false</organismsDiffer>
    <experiments>3</experiments>
</comment>
<comment type="alternative products">
    <event type="alternative splicing"/>
    <isoform>
        <id>Q6ZUT1-1</id>
        <name>1</name>
        <sequence type="displayed"/>
    </isoform>
    <isoform>
        <id>Q6ZUT1-2</id>
        <name>2</name>
        <sequence type="described" ref="VSP_022686"/>
    </isoform>
    <isoform>
        <id>Q6ZUT1-3</id>
        <name>3</name>
        <sequence type="described" ref="VSP_022685 VSP_022686"/>
    </isoform>
</comment>
<evidence type="ECO:0000256" key="1">
    <source>
        <dbReference type="SAM" id="MobiDB-lite"/>
    </source>
</evidence>
<evidence type="ECO:0000303" key="2">
    <source>
    </source>
</evidence>
<evidence type="ECO:0000303" key="3">
    <source>
    </source>
</evidence>
<evidence type="ECO:0000305" key="4"/>
<evidence type="ECO:0000312" key="5">
    <source>
        <dbReference type="HGNC" id="HGNC:25569"/>
    </source>
</evidence>
<evidence type="ECO:0007744" key="6">
    <source>
    </source>
</evidence>
<evidence type="ECO:0007744" key="7">
    <source>
    </source>
</evidence>
<protein>
    <recommendedName>
        <fullName>Uncharacterized protein NKAPD1</fullName>
    </recommendedName>
    <alternativeName>
        <fullName evidence="5">NKAP domain containing protein 1</fullName>
    </alternativeName>
</protein>
<organism>
    <name type="scientific">Homo sapiens</name>
    <name type="common">Human</name>
    <dbReference type="NCBI Taxonomy" id="9606"/>
    <lineage>
        <taxon>Eukaryota</taxon>
        <taxon>Metazoa</taxon>
        <taxon>Chordata</taxon>
        <taxon>Craniata</taxon>
        <taxon>Vertebrata</taxon>
        <taxon>Euteleostomi</taxon>
        <taxon>Mammalia</taxon>
        <taxon>Eutheria</taxon>
        <taxon>Euarchontoglires</taxon>
        <taxon>Primates</taxon>
        <taxon>Haplorrhini</taxon>
        <taxon>Catarrhini</taxon>
        <taxon>Hominidae</taxon>
        <taxon>Homo</taxon>
    </lineage>
</organism>
<name>NKAP1_HUMAN</name>
<reference key="1">
    <citation type="journal article" date="2004" name="Nat. Genet.">
        <title>Complete sequencing and characterization of 21,243 full-length human cDNAs.</title>
        <authorList>
            <person name="Ota T."/>
            <person name="Suzuki Y."/>
            <person name="Nishikawa T."/>
            <person name="Otsuki T."/>
            <person name="Sugiyama T."/>
            <person name="Irie R."/>
            <person name="Wakamatsu A."/>
            <person name="Hayashi K."/>
            <person name="Sato H."/>
            <person name="Nagai K."/>
            <person name="Kimura K."/>
            <person name="Makita H."/>
            <person name="Sekine M."/>
            <person name="Obayashi M."/>
            <person name="Nishi T."/>
            <person name="Shibahara T."/>
            <person name="Tanaka T."/>
            <person name="Ishii S."/>
            <person name="Yamamoto J."/>
            <person name="Saito K."/>
            <person name="Kawai Y."/>
            <person name="Isono Y."/>
            <person name="Nakamura Y."/>
            <person name="Nagahari K."/>
            <person name="Murakami K."/>
            <person name="Yasuda T."/>
            <person name="Iwayanagi T."/>
            <person name="Wagatsuma M."/>
            <person name="Shiratori A."/>
            <person name="Sudo H."/>
            <person name="Hosoiri T."/>
            <person name="Kaku Y."/>
            <person name="Kodaira H."/>
            <person name="Kondo H."/>
            <person name="Sugawara M."/>
            <person name="Takahashi M."/>
            <person name="Kanda K."/>
            <person name="Yokoi T."/>
            <person name="Furuya T."/>
            <person name="Kikkawa E."/>
            <person name="Omura Y."/>
            <person name="Abe K."/>
            <person name="Kamihara K."/>
            <person name="Katsuta N."/>
            <person name="Sato K."/>
            <person name="Tanikawa M."/>
            <person name="Yamazaki M."/>
            <person name="Ninomiya K."/>
            <person name="Ishibashi T."/>
            <person name="Yamashita H."/>
            <person name="Murakawa K."/>
            <person name="Fujimori K."/>
            <person name="Tanai H."/>
            <person name="Kimata M."/>
            <person name="Watanabe M."/>
            <person name="Hiraoka S."/>
            <person name="Chiba Y."/>
            <person name="Ishida S."/>
            <person name="Ono Y."/>
            <person name="Takiguchi S."/>
            <person name="Watanabe S."/>
            <person name="Yosida M."/>
            <person name="Hotuta T."/>
            <person name="Kusano J."/>
            <person name="Kanehori K."/>
            <person name="Takahashi-Fujii A."/>
            <person name="Hara H."/>
            <person name="Tanase T.-O."/>
            <person name="Nomura Y."/>
            <person name="Togiya S."/>
            <person name="Komai F."/>
            <person name="Hara R."/>
            <person name="Takeuchi K."/>
            <person name="Arita M."/>
            <person name="Imose N."/>
            <person name="Musashino K."/>
            <person name="Yuuki H."/>
            <person name="Oshima A."/>
            <person name="Sasaki N."/>
            <person name="Aotsuka S."/>
            <person name="Yoshikawa Y."/>
            <person name="Matsunawa H."/>
            <person name="Ichihara T."/>
            <person name="Shiohata N."/>
            <person name="Sano S."/>
            <person name="Moriya S."/>
            <person name="Momiyama H."/>
            <person name="Satoh N."/>
            <person name="Takami S."/>
            <person name="Terashima Y."/>
            <person name="Suzuki O."/>
            <person name="Nakagawa S."/>
            <person name="Senoh A."/>
            <person name="Mizoguchi H."/>
            <person name="Goto Y."/>
            <person name="Shimizu F."/>
            <person name="Wakebe H."/>
            <person name="Hishigaki H."/>
            <person name="Watanabe T."/>
            <person name="Sugiyama A."/>
            <person name="Takemoto M."/>
            <person name="Kawakami B."/>
            <person name="Yamazaki M."/>
            <person name="Watanabe K."/>
            <person name="Kumagai A."/>
            <person name="Itakura S."/>
            <person name="Fukuzumi Y."/>
            <person name="Fujimori Y."/>
            <person name="Komiyama M."/>
            <person name="Tashiro H."/>
            <person name="Tanigami A."/>
            <person name="Fujiwara T."/>
            <person name="Ono T."/>
            <person name="Yamada K."/>
            <person name="Fujii Y."/>
            <person name="Ozaki K."/>
            <person name="Hirao M."/>
            <person name="Ohmori Y."/>
            <person name="Kawabata A."/>
            <person name="Hikiji T."/>
            <person name="Kobatake N."/>
            <person name="Inagaki H."/>
            <person name="Ikema Y."/>
            <person name="Okamoto S."/>
            <person name="Okitani R."/>
            <person name="Kawakami T."/>
            <person name="Noguchi S."/>
            <person name="Itoh T."/>
            <person name="Shigeta K."/>
            <person name="Senba T."/>
            <person name="Matsumura K."/>
            <person name="Nakajima Y."/>
            <person name="Mizuno T."/>
            <person name="Morinaga M."/>
            <person name="Sasaki M."/>
            <person name="Togashi T."/>
            <person name="Oyama M."/>
            <person name="Hata H."/>
            <person name="Watanabe M."/>
            <person name="Komatsu T."/>
            <person name="Mizushima-Sugano J."/>
            <person name="Satoh T."/>
            <person name="Shirai Y."/>
            <person name="Takahashi Y."/>
            <person name="Nakagawa K."/>
            <person name="Okumura K."/>
            <person name="Nagase T."/>
            <person name="Nomura N."/>
            <person name="Kikuchi H."/>
            <person name="Masuho Y."/>
            <person name="Yamashita R."/>
            <person name="Nakai K."/>
            <person name="Yada T."/>
            <person name="Nakamura Y."/>
            <person name="Ohara O."/>
            <person name="Isogai T."/>
            <person name="Sugano S."/>
        </authorList>
    </citation>
    <scope>NUCLEOTIDE SEQUENCE [LARGE SCALE MRNA] (ISOFORM 1)</scope>
    <source>
        <tissue>Teratocarcinoma</tissue>
    </source>
</reference>
<reference key="2">
    <citation type="journal article" date="2007" name="BMC Genomics">
        <title>The full-ORF clone resource of the German cDNA consortium.</title>
        <authorList>
            <person name="Bechtel S."/>
            <person name="Rosenfelder H."/>
            <person name="Duda A."/>
            <person name="Schmidt C.P."/>
            <person name="Ernst U."/>
            <person name="Wellenreuther R."/>
            <person name="Mehrle A."/>
            <person name="Schuster C."/>
            <person name="Bahr A."/>
            <person name="Bloecker H."/>
            <person name="Heubner D."/>
            <person name="Hoerlein A."/>
            <person name="Michel G."/>
            <person name="Wedler H."/>
            <person name="Koehrer K."/>
            <person name="Ottenwaelder B."/>
            <person name="Poustka A."/>
            <person name="Wiemann S."/>
            <person name="Schupp I."/>
        </authorList>
    </citation>
    <scope>NUCLEOTIDE SEQUENCE [LARGE SCALE MRNA] (ISOFORM 3)</scope>
    <source>
        <tissue>Colon endothelium</tissue>
    </source>
</reference>
<reference key="3">
    <citation type="journal article" date="2004" name="Genome Res.">
        <title>The status, quality, and expansion of the NIH full-length cDNA project: the Mammalian Gene Collection (MGC).</title>
        <authorList>
            <consortium name="The MGC Project Team"/>
        </authorList>
    </citation>
    <scope>NUCLEOTIDE SEQUENCE [LARGE SCALE MRNA] (ISOFORMS 1 AND 2)</scope>
    <source>
        <tissue>Brain</tissue>
        <tissue>Cervix</tissue>
        <tissue>PNS</tissue>
    </source>
</reference>
<reference key="4">
    <citation type="journal article" date="2011" name="Sci. Signal.">
        <title>System-wide temporal characterization of the proteome and phosphoproteome of human embryonic stem cell differentiation.</title>
        <authorList>
            <person name="Rigbolt K.T."/>
            <person name="Prokhorova T.A."/>
            <person name="Akimov V."/>
            <person name="Henningsen J."/>
            <person name="Johansen P.T."/>
            <person name="Kratchmarova I."/>
            <person name="Kassem M."/>
            <person name="Mann M."/>
            <person name="Olsen J.V."/>
            <person name="Blagoev B."/>
        </authorList>
    </citation>
    <scope>PHOSPHORYLATION [LARGE SCALE ANALYSIS] AT THR-123; SER-125 AND SER-126 (ISOFORM 2)</scope>
    <scope>PHOSPHORYLATION [LARGE SCALE ANALYSIS] AT THR-94; SER-96 AND SER-97 (ISOFORM 3)</scope>
    <scope>IDENTIFICATION BY MASS SPECTROMETRY [LARGE SCALE ANALYSIS]</scope>
</reference>
<reference key="5">
    <citation type="journal article" date="2017" name="Nat. Struct. Mol. Biol.">
        <title>Site-specific mapping of the human SUMO proteome reveals co-modification with phosphorylation.</title>
        <authorList>
            <person name="Hendriks I.A."/>
            <person name="Lyon D."/>
            <person name="Young C."/>
            <person name="Jensen L.J."/>
            <person name="Vertegaal A.C."/>
            <person name="Nielsen M.L."/>
        </authorList>
    </citation>
    <scope>SUMOYLATION [LARGE SCALE ANALYSIS] AT LYS-8 AND LYS-76</scope>
    <scope>IDENTIFICATION BY MASS SPECTROMETRY [LARGE SCALE ANALYSIS]</scope>
</reference>
<keyword id="KW-0025">Alternative splicing</keyword>
<keyword id="KW-1017">Isopeptide bond</keyword>
<keyword id="KW-0597">Phosphoprotein</keyword>
<keyword id="KW-1267">Proteomics identification</keyword>
<keyword id="KW-1185">Reference proteome</keyword>
<keyword id="KW-0832">Ubl conjugation</keyword>
<dbReference type="EMBL" id="AK125340">
    <property type="protein sequence ID" value="BAC86137.1"/>
    <property type="molecule type" value="mRNA"/>
</dbReference>
<dbReference type="EMBL" id="BX538107">
    <property type="protein sequence ID" value="CAD98020.1"/>
    <property type="molecule type" value="mRNA"/>
</dbReference>
<dbReference type="EMBL" id="BC005403">
    <property type="protein sequence ID" value="AAH05403.3"/>
    <property type="molecule type" value="mRNA"/>
</dbReference>
<dbReference type="EMBL" id="BC030546">
    <property type="protein sequence ID" value="AAH30546.3"/>
    <property type="molecule type" value="mRNA"/>
</dbReference>
<dbReference type="EMBL" id="BC048133">
    <property type="protein sequence ID" value="AAH48133.2"/>
    <property type="molecule type" value="mRNA"/>
</dbReference>
<dbReference type="EMBL" id="BC072455">
    <property type="protein sequence ID" value="AAH72455.2"/>
    <property type="molecule type" value="mRNA"/>
</dbReference>
<dbReference type="CCDS" id="CCDS41715.1">
    <molecule id="Q6ZUT1-1"/>
</dbReference>
<dbReference type="CCDS" id="CCDS73383.1">
    <molecule id="Q6ZUT1-3"/>
</dbReference>
<dbReference type="CCDS" id="CCDS8356.2">
    <molecule id="Q6ZUT1-2"/>
</dbReference>
<dbReference type="RefSeq" id="NP_001076438.1">
    <molecule id="Q6ZUT1-2"/>
    <property type="nucleotide sequence ID" value="NM_001082969.2"/>
</dbReference>
<dbReference type="RefSeq" id="NP_001076439.1">
    <molecule id="Q6ZUT1-1"/>
    <property type="nucleotide sequence ID" value="NM_001082970.2"/>
</dbReference>
<dbReference type="RefSeq" id="NP_001287946.1">
    <molecule id="Q6ZUT1-1"/>
    <property type="nucleotide sequence ID" value="NM_001301017.2"/>
</dbReference>
<dbReference type="RefSeq" id="NP_001287948.1">
    <molecule id="Q6ZUT1-3"/>
    <property type="nucleotide sequence ID" value="NM_001301019.2"/>
</dbReference>
<dbReference type="RefSeq" id="NP_001287950.1">
    <property type="nucleotide sequence ID" value="NM_001301021.1"/>
</dbReference>
<dbReference type="RefSeq" id="NP_060665.3">
    <molecule id="Q6ZUT1-2"/>
    <property type="nucleotide sequence ID" value="NM_018195.3"/>
</dbReference>
<dbReference type="RefSeq" id="XP_047283153.1">
    <molecule id="Q6ZUT1-2"/>
    <property type="nucleotide sequence ID" value="XM_047427197.1"/>
</dbReference>
<dbReference type="RefSeq" id="XP_047283154.1">
    <molecule id="Q6ZUT1-1"/>
    <property type="nucleotide sequence ID" value="XM_047427198.1"/>
</dbReference>
<dbReference type="RefSeq" id="XP_054225224.1">
    <molecule id="Q6ZUT1-2"/>
    <property type="nucleotide sequence ID" value="XM_054369249.1"/>
</dbReference>
<dbReference type="RefSeq" id="XP_054225225.1">
    <molecule id="Q6ZUT1-1"/>
    <property type="nucleotide sequence ID" value="XM_054369250.1"/>
</dbReference>
<dbReference type="BioGRID" id="120512">
    <property type="interactions" value="161"/>
</dbReference>
<dbReference type="FunCoup" id="Q6ZUT1">
    <property type="interactions" value="2968"/>
</dbReference>
<dbReference type="IntAct" id="Q6ZUT1">
    <property type="interactions" value="143"/>
</dbReference>
<dbReference type="MINT" id="Q6ZUT1"/>
<dbReference type="STRING" id="9606.ENSP00000376767"/>
<dbReference type="iPTMnet" id="Q6ZUT1"/>
<dbReference type="PhosphoSitePlus" id="Q6ZUT1"/>
<dbReference type="BioMuta" id="NKAPD1"/>
<dbReference type="DMDM" id="125863638"/>
<dbReference type="jPOST" id="Q6ZUT1"/>
<dbReference type="MassIVE" id="Q6ZUT1"/>
<dbReference type="PaxDb" id="9606-ENSP00000376767"/>
<dbReference type="PeptideAtlas" id="Q6ZUT1"/>
<dbReference type="ProteomicsDB" id="68355">
    <molecule id="Q6ZUT1-1"/>
</dbReference>
<dbReference type="ProteomicsDB" id="68356">
    <molecule id="Q6ZUT1-2"/>
</dbReference>
<dbReference type="ProteomicsDB" id="68357">
    <molecule id="Q6ZUT1-3"/>
</dbReference>
<dbReference type="Pumba" id="Q6ZUT1"/>
<dbReference type="Antibodypedia" id="45617">
    <property type="antibodies" value="90 antibodies from 15 providers"/>
</dbReference>
<dbReference type="DNASU" id="55216"/>
<dbReference type="Ensembl" id="ENST00000280352.13">
    <molecule id="Q6ZUT1-1"/>
    <property type="protein sequence ID" value="ENSP00000339076.7"/>
    <property type="gene ID" value="ENSG00000150776.18"/>
</dbReference>
<dbReference type="Ensembl" id="ENST00000393047.8">
    <molecule id="Q6ZUT1-2"/>
    <property type="protein sequence ID" value="ENSP00000376767.3"/>
    <property type="gene ID" value="ENSG00000150776.18"/>
</dbReference>
<dbReference type="Ensembl" id="ENST00000420986.6">
    <molecule id="Q6ZUT1-1"/>
    <property type="protein sequence ID" value="ENSP00000402208.2"/>
    <property type="gene ID" value="ENSG00000150776.18"/>
</dbReference>
<dbReference type="Ensembl" id="ENST00000532163.5">
    <molecule id="Q6ZUT1-3"/>
    <property type="protein sequence ID" value="ENSP00000432188.1"/>
    <property type="gene ID" value="ENSG00000150776.18"/>
</dbReference>
<dbReference type="GeneID" id="55216"/>
<dbReference type="KEGG" id="hsa:55216"/>
<dbReference type="MANE-Select" id="ENST00000393047.8">
    <molecule id="Q6ZUT1-2"/>
    <property type="protein sequence ID" value="ENSP00000376767.3"/>
    <property type="RefSeq nucleotide sequence ID" value="NM_018195.4"/>
    <property type="RefSeq protein sequence ID" value="NP_060665.3"/>
</dbReference>
<dbReference type="UCSC" id="uc001pmr.5">
    <molecule id="Q6ZUT1-1"/>
    <property type="organism name" value="human"/>
</dbReference>
<dbReference type="AGR" id="HGNC:25569"/>
<dbReference type="CTD" id="55216"/>
<dbReference type="GeneCards" id="NKAPD1"/>
<dbReference type="HGNC" id="HGNC:25569">
    <property type="gene designation" value="NKAPD1"/>
</dbReference>
<dbReference type="HPA" id="ENSG00000150776">
    <property type="expression patterns" value="Low tissue specificity"/>
</dbReference>
<dbReference type="neXtProt" id="NX_Q6ZUT1"/>
<dbReference type="OpenTargets" id="ENSG00000150776"/>
<dbReference type="PharmGKB" id="PA143485352"/>
<dbReference type="VEuPathDB" id="HostDB:ENSG00000150776"/>
<dbReference type="eggNOG" id="ENOG502S0Y8">
    <property type="taxonomic scope" value="Eukaryota"/>
</dbReference>
<dbReference type="GeneTree" id="ENSGT00510000048628"/>
<dbReference type="HOGENOM" id="CLU_082748_0_0_1"/>
<dbReference type="InParanoid" id="Q6ZUT1"/>
<dbReference type="OMA" id="SQRADWK"/>
<dbReference type="OrthoDB" id="10055694at2759"/>
<dbReference type="PAN-GO" id="Q6ZUT1">
    <property type="GO annotations" value="0 GO annotations based on evolutionary models"/>
</dbReference>
<dbReference type="PhylomeDB" id="Q6ZUT1"/>
<dbReference type="TreeFam" id="TF332101"/>
<dbReference type="PathwayCommons" id="Q6ZUT1"/>
<dbReference type="SignaLink" id="Q6ZUT1"/>
<dbReference type="BioGRID-ORCS" id="55216">
    <property type="hits" value="357 hits in 1139 CRISPR screens"/>
</dbReference>
<dbReference type="CD-CODE" id="91857CE7">
    <property type="entry name" value="Nucleolus"/>
</dbReference>
<dbReference type="ChiTaRS" id="C11orf57">
    <property type="organism name" value="human"/>
</dbReference>
<dbReference type="GenomeRNAi" id="55216"/>
<dbReference type="Pharos" id="Q6ZUT1">
    <property type="development level" value="Tdark"/>
</dbReference>
<dbReference type="PRO" id="PR:Q6ZUT1"/>
<dbReference type="Proteomes" id="UP000005640">
    <property type="component" value="Chromosome 11"/>
</dbReference>
<dbReference type="RNAct" id="Q6ZUT1">
    <property type="molecule type" value="protein"/>
</dbReference>
<dbReference type="Bgee" id="ENSG00000150776">
    <property type="expression patterns" value="Expressed in calcaneal tendon and 186 other cell types or tissues"/>
</dbReference>
<dbReference type="ExpressionAtlas" id="Q6ZUT1">
    <property type="expression patterns" value="baseline and differential"/>
</dbReference>
<dbReference type="GO" id="GO:0042802">
    <property type="term" value="F:identical protein binding"/>
    <property type="evidence" value="ECO:0000353"/>
    <property type="project" value="IntAct"/>
</dbReference>
<dbReference type="InterPro" id="IPR043407">
    <property type="entry name" value="Nkap_D1"/>
</dbReference>
<dbReference type="PANTHER" id="PTHR46940:SF1">
    <property type="entry name" value="NKAP DOMAIN CONTAINING 1"/>
    <property type="match status" value="1"/>
</dbReference>
<dbReference type="PANTHER" id="PTHR46940">
    <property type="entry name" value="NKAP DOMAIN-CONTAINING 1"/>
    <property type="match status" value="1"/>
</dbReference>
<dbReference type="Pfam" id="PF15692">
    <property type="entry name" value="NKAP"/>
    <property type="match status" value="1"/>
</dbReference>
<gene>
    <name evidence="5" type="primary">NKAPD1</name>
    <name type="synonym">C11orf57</name>
</gene>
<accession>Q6ZUT1</accession>
<accession>Q5RL41</accession>
<accession>Q6IN53</accession>
<accession>Q7Z357</accession>
<accession>Q8N2T3</accession>
<proteinExistence type="evidence at protein level"/>